<comment type="function">
    <text evidence="1">This protein binds specifically to 23S rRNA; its binding is stimulated by other ribosomal proteins, e.g. L4, L17, and L20. It is important during the early stages of 50S assembly. It makes multiple contacts with different domains of the 23S rRNA in the assembled 50S subunit and ribosome (By similarity).</text>
</comment>
<comment type="function">
    <text evidence="1">The globular domain of the protein is located near the polypeptide exit tunnel on the outside of the subunit, while an extended beta-hairpin is found that lines the wall of the exit tunnel in the center of the 70S ribosome.</text>
</comment>
<comment type="subunit">
    <text evidence="1">Part of the 50S ribosomal subunit.</text>
</comment>
<comment type="similarity">
    <text evidence="1">Belongs to the universal ribosomal protein uL22 family.</text>
</comment>
<protein>
    <recommendedName>
        <fullName evidence="1">Large ribosomal subunit protein uL22</fullName>
    </recommendedName>
    <alternativeName>
        <fullName evidence="2">50S ribosomal protein L22</fullName>
    </alternativeName>
</protein>
<proteinExistence type="inferred from homology"/>
<accession>Q6HPQ3</accession>
<sequence length="113" mass="12509">MQAKAVARTVRIAPRKVRLVVDLIRGKQVGEAIAILNHTPKTASPVVEKVLKSAIANAEHNYEMDINSLVVEKVFVDEGPTLKRFRPRAMGRASQINKRTSHITVVVSEKKEG</sequence>
<keyword id="KW-0687">Ribonucleoprotein</keyword>
<keyword id="KW-0689">Ribosomal protein</keyword>
<keyword id="KW-0694">RNA-binding</keyword>
<keyword id="KW-0699">rRNA-binding</keyword>
<name>RL22_BACHK</name>
<evidence type="ECO:0000255" key="1">
    <source>
        <dbReference type="HAMAP-Rule" id="MF_01331"/>
    </source>
</evidence>
<evidence type="ECO:0000305" key="2"/>
<organism>
    <name type="scientific">Bacillus thuringiensis subsp. konkukian (strain 97-27)</name>
    <dbReference type="NCBI Taxonomy" id="281309"/>
    <lineage>
        <taxon>Bacteria</taxon>
        <taxon>Bacillati</taxon>
        <taxon>Bacillota</taxon>
        <taxon>Bacilli</taxon>
        <taxon>Bacillales</taxon>
        <taxon>Bacillaceae</taxon>
        <taxon>Bacillus</taxon>
        <taxon>Bacillus cereus group</taxon>
    </lineage>
</organism>
<gene>
    <name evidence="1" type="primary">rplV</name>
    <name type="ordered locus">BT9727_0111</name>
</gene>
<feature type="chain" id="PRO_0000243120" description="Large ribosomal subunit protein uL22">
    <location>
        <begin position="1"/>
        <end position="113"/>
    </location>
</feature>
<dbReference type="EMBL" id="AE017355">
    <property type="protein sequence ID" value="AAT61447.1"/>
    <property type="molecule type" value="Genomic_DNA"/>
</dbReference>
<dbReference type="RefSeq" id="WP_001148025.1">
    <property type="nucleotide sequence ID" value="NC_005957.1"/>
</dbReference>
<dbReference type="RefSeq" id="YP_034467.1">
    <property type="nucleotide sequence ID" value="NC_005957.1"/>
</dbReference>
<dbReference type="SMR" id="Q6HPQ3"/>
<dbReference type="GeneID" id="93010938"/>
<dbReference type="KEGG" id="btk:BT9727_0111"/>
<dbReference type="PATRIC" id="fig|281309.8.peg.112"/>
<dbReference type="HOGENOM" id="CLU_083987_3_3_9"/>
<dbReference type="Proteomes" id="UP000001301">
    <property type="component" value="Chromosome"/>
</dbReference>
<dbReference type="GO" id="GO:0022625">
    <property type="term" value="C:cytosolic large ribosomal subunit"/>
    <property type="evidence" value="ECO:0007669"/>
    <property type="project" value="TreeGrafter"/>
</dbReference>
<dbReference type="GO" id="GO:0019843">
    <property type="term" value="F:rRNA binding"/>
    <property type="evidence" value="ECO:0007669"/>
    <property type="project" value="UniProtKB-UniRule"/>
</dbReference>
<dbReference type="GO" id="GO:0003735">
    <property type="term" value="F:structural constituent of ribosome"/>
    <property type="evidence" value="ECO:0007669"/>
    <property type="project" value="InterPro"/>
</dbReference>
<dbReference type="GO" id="GO:0006412">
    <property type="term" value="P:translation"/>
    <property type="evidence" value="ECO:0007669"/>
    <property type="project" value="UniProtKB-UniRule"/>
</dbReference>
<dbReference type="CDD" id="cd00336">
    <property type="entry name" value="Ribosomal_L22"/>
    <property type="match status" value="1"/>
</dbReference>
<dbReference type="FunFam" id="3.90.470.10:FF:000001">
    <property type="entry name" value="50S ribosomal protein L22"/>
    <property type="match status" value="1"/>
</dbReference>
<dbReference type="Gene3D" id="3.90.470.10">
    <property type="entry name" value="Ribosomal protein L22/L17"/>
    <property type="match status" value="1"/>
</dbReference>
<dbReference type="HAMAP" id="MF_01331_B">
    <property type="entry name" value="Ribosomal_uL22_B"/>
    <property type="match status" value="1"/>
</dbReference>
<dbReference type="InterPro" id="IPR001063">
    <property type="entry name" value="Ribosomal_uL22"/>
</dbReference>
<dbReference type="InterPro" id="IPR005727">
    <property type="entry name" value="Ribosomal_uL22_bac/chlpt-type"/>
</dbReference>
<dbReference type="InterPro" id="IPR047867">
    <property type="entry name" value="Ribosomal_uL22_bac/org-type"/>
</dbReference>
<dbReference type="InterPro" id="IPR018260">
    <property type="entry name" value="Ribosomal_uL22_CS"/>
</dbReference>
<dbReference type="InterPro" id="IPR036394">
    <property type="entry name" value="Ribosomal_uL22_sf"/>
</dbReference>
<dbReference type="NCBIfam" id="TIGR01044">
    <property type="entry name" value="rplV_bact"/>
    <property type="match status" value="1"/>
</dbReference>
<dbReference type="PANTHER" id="PTHR13501">
    <property type="entry name" value="CHLOROPLAST 50S RIBOSOMAL PROTEIN L22-RELATED"/>
    <property type="match status" value="1"/>
</dbReference>
<dbReference type="PANTHER" id="PTHR13501:SF8">
    <property type="entry name" value="LARGE RIBOSOMAL SUBUNIT PROTEIN UL22M"/>
    <property type="match status" value="1"/>
</dbReference>
<dbReference type="Pfam" id="PF00237">
    <property type="entry name" value="Ribosomal_L22"/>
    <property type="match status" value="1"/>
</dbReference>
<dbReference type="SUPFAM" id="SSF54843">
    <property type="entry name" value="Ribosomal protein L22"/>
    <property type="match status" value="1"/>
</dbReference>
<dbReference type="PROSITE" id="PS00464">
    <property type="entry name" value="RIBOSOMAL_L22"/>
    <property type="match status" value="1"/>
</dbReference>
<reference key="1">
    <citation type="journal article" date="2006" name="J. Bacteriol.">
        <title>Pathogenomic sequence analysis of Bacillus cereus and Bacillus thuringiensis isolates closely related to Bacillus anthracis.</title>
        <authorList>
            <person name="Han C.S."/>
            <person name="Xie G."/>
            <person name="Challacombe J.F."/>
            <person name="Altherr M.R."/>
            <person name="Bhotika S.S."/>
            <person name="Bruce D."/>
            <person name="Campbell C.S."/>
            <person name="Campbell M.L."/>
            <person name="Chen J."/>
            <person name="Chertkov O."/>
            <person name="Cleland C."/>
            <person name="Dimitrijevic M."/>
            <person name="Doggett N.A."/>
            <person name="Fawcett J.J."/>
            <person name="Glavina T."/>
            <person name="Goodwin L.A."/>
            <person name="Hill K.K."/>
            <person name="Hitchcock P."/>
            <person name="Jackson P.J."/>
            <person name="Keim P."/>
            <person name="Kewalramani A.R."/>
            <person name="Longmire J."/>
            <person name="Lucas S."/>
            <person name="Malfatti S."/>
            <person name="McMurry K."/>
            <person name="Meincke L.J."/>
            <person name="Misra M."/>
            <person name="Moseman B.L."/>
            <person name="Mundt M."/>
            <person name="Munk A.C."/>
            <person name="Okinaka R.T."/>
            <person name="Parson-Quintana B."/>
            <person name="Reilly L.P."/>
            <person name="Richardson P."/>
            <person name="Robinson D.L."/>
            <person name="Rubin E."/>
            <person name="Saunders E."/>
            <person name="Tapia R."/>
            <person name="Tesmer J.G."/>
            <person name="Thayer N."/>
            <person name="Thompson L.S."/>
            <person name="Tice H."/>
            <person name="Ticknor L.O."/>
            <person name="Wills P.L."/>
            <person name="Brettin T.S."/>
            <person name="Gilna P."/>
        </authorList>
    </citation>
    <scope>NUCLEOTIDE SEQUENCE [LARGE SCALE GENOMIC DNA]</scope>
    <source>
        <strain>97-27</strain>
    </source>
</reference>